<proteinExistence type="predicted"/>
<keyword id="KW-1185">Reference proteome</keyword>
<keyword id="KW-0677">Repeat</keyword>
<accession>Q54Q89</accession>
<name>RCCDC_DICDI</name>
<gene>
    <name type="ORF">DDB_G0284033</name>
</gene>
<feature type="chain" id="PRO_0000371336" description="RCC1 repeat-containing protein DDB_G0284033">
    <location>
        <begin position="1"/>
        <end position="487"/>
    </location>
</feature>
<feature type="repeat" description="RCC1 1">
    <location>
        <begin position="66"/>
        <end position="127"/>
    </location>
</feature>
<feature type="repeat" description="RCC1 2">
    <location>
        <begin position="207"/>
        <end position="259"/>
    </location>
</feature>
<feature type="repeat" description="RCC1 3">
    <location>
        <begin position="260"/>
        <end position="313"/>
    </location>
</feature>
<feature type="repeat" description="RCC1 4">
    <location>
        <begin position="373"/>
        <end position="426"/>
    </location>
</feature>
<feature type="repeat" description="RCC1 5">
    <location>
        <begin position="428"/>
        <end position="483"/>
    </location>
</feature>
<reference key="1">
    <citation type="journal article" date="2005" name="Nature">
        <title>The genome of the social amoeba Dictyostelium discoideum.</title>
        <authorList>
            <person name="Eichinger L."/>
            <person name="Pachebat J.A."/>
            <person name="Gloeckner G."/>
            <person name="Rajandream M.A."/>
            <person name="Sucgang R."/>
            <person name="Berriman M."/>
            <person name="Song J."/>
            <person name="Olsen R."/>
            <person name="Szafranski K."/>
            <person name="Xu Q."/>
            <person name="Tunggal B."/>
            <person name="Kummerfeld S."/>
            <person name="Madera M."/>
            <person name="Konfortov B.A."/>
            <person name="Rivero F."/>
            <person name="Bankier A.T."/>
            <person name="Lehmann R."/>
            <person name="Hamlin N."/>
            <person name="Davies R."/>
            <person name="Gaudet P."/>
            <person name="Fey P."/>
            <person name="Pilcher K."/>
            <person name="Chen G."/>
            <person name="Saunders D."/>
            <person name="Sodergren E.J."/>
            <person name="Davis P."/>
            <person name="Kerhornou A."/>
            <person name="Nie X."/>
            <person name="Hall N."/>
            <person name="Anjard C."/>
            <person name="Hemphill L."/>
            <person name="Bason N."/>
            <person name="Farbrother P."/>
            <person name="Desany B."/>
            <person name="Just E."/>
            <person name="Morio T."/>
            <person name="Rost R."/>
            <person name="Churcher C.M."/>
            <person name="Cooper J."/>
            <person name="Haydock S."/>
            <person name="van Driessche N."/>
            <person name="Cronin A."/>
            <person name="Goodhead I."/>
            <person name="Muzny D.M."/>
            <person name="Mourier T."/>
            <person name="Pain A."/>
            <person name="Lu M."/>
            <person name="Harper D."/>
            <person name="Lindsay R."/>
            <person name="Hauser H."/>
            <person name="James K.D."/>
            <person name="Quiles M."/>
            <person name="Madan Babu M."/>
            <person name="Saito T."/>
            <person name="Buchrieser C."/>
            <person name="Wardroper A."/>
            <person name="Felder M."/>
            <person name="Thangavelu M."/>
            <person name="Johnson D."/>
            <person name="Knights A."/>
            <person name="Loulseged H."/>
            <person name="Mungall K.L."/>
            <person name="Oliver K."/>
            <person name="Price C."/>
            <person name="Quail M.A."/>
            <person name="Urushihara H."/>
            <person name="Hernandez J."/>
            <person name="Rabbinowitsch E."/>
            <person name="Steffen D."/>
            <person name="Sanders M."/>
            <person name="Ma J."/>
            <person name="Kohara Y."/>
            <person name="Sharp S."/>
            <person name="Simmonds M.N."/>
            <person name="Spiegler S."/>
            <person name="Tivey A."/>
            <person name="Sugano S."/>
            <person name="White B."/>
            <person name="Walker D."/>
            <person name="Woodward J.R."/>
            <person name="Winckler T."/>
            <person name="Tanaka Y."/>
            <person name="Shaulsky G."/>
            <person name="Schleicher M."/>
            <person name="Weinstock G.M."/>
            <person name="Rosenthal A."/>
            <person name="Cox E.C."/>
            <person name="Chisholm R.L."/>
            <person name="Gibbs R.A."/>
            <person name="Loomis W.F."/>
            <person name="Platzer M."/>
            <person name="Kay R.R."/>
            <person name="Williams J.G."/>
            <person name="Dear P.H."/>
            <person name="Noegel A.A."/>
            <person name="Barrell B.G."/>
            <person name="Kuspa A."/>
        </authorList>
    </citation>
    <scope>NUCLEOTIDE SEQUENCE [LARGE SCALE GENOMIC DNA]</scope>
    <source>
        <strain>AX4</strain>
    </source>
</reference>
<sequence length="487" mass="54523">MMKGHFCIQNNKTLLFKSLIHPTSSHNLSPYLYFFLSSNKLNSSNISSSNFVITSNIRGYSSSQYSNKVYSWGSGLNGKLGHGLDETKIVVPKEIEIKEDDDNNRVFNQGKINKITSGTTYSIFSGYDQIKDRQVFYGCGDNRDAQLIVGNGKIQSLENIELLESPMLKSDQMKGKQLKQLISGTYHNACILNDSNSNNNNNNNKDRSLILLWGASNSGQIGSPEYNRVQYDPYNNKVLSEIGIKKISMGATFTIALSNDGKLYSFGSSTFNELGNGDMFNEREPKLIDNQLLQDNEIIDLECGFFHTVALTSDNKILTWGRNQESQCFPVPEGTGKGSFTNVQYLDTSSLGDHDKIIQIGASNLNSYILTENGNIYSIGSNDHGQCGIEKSNFKKGILNKIKIGDDGNIKVKKFYSRFKTVIVETTDGRFFGWGSNFDHQLALETRCIYFTPMELNNLNRLHKDYNIIDISISLSHCISLNSNPQK</sequence>
<dbReference type="EMBL" id="AAFI02000059">
    <property type="status" value="NOT_ANNOTATED_CDS"/>
    <property type="molecule type" value="Genomic_DNA"/>
</dbReference>
<dbReference type="EMBL" id="AAFI02000060">
    <property type="status" value="NOT_ANNOTATED_CDS"/>
    <property type="molecule type" value="Genomic_DNA"/>
</dbReference>
<dbReference type="SMR" id="Q54Q89"/>
<dbReference type="STRING" id="44689.Q54Q89"/>
<dbReference type="dictyBase" id="DDB_G0284033"/>
<dbReference type="VEuPathDB" id="AmoebaDB:DDB_G0292586"/>
<dbReference type="InParanoid" id="Q54Q89"/>
<dbReference type="OMA" id="LTWGRNQ"/>
<dbReference type="PhylomeDB" id="Q54Q89"/>
<dbReference type="PRO" id="PR:Q54Q89"/>
<dbReference type="Proteomes" id="UP000002195">
    <property type="component" value="Chromosome 4"/>
</dbReference>
<dbReference type="Gene3D" id="2.130.10.30">
    <property type="entry name" value="Regulator of chromosome condensation 1/beta-lactamase-inhibitor protein II"/>
    <property type="match status" value="2"/>
</dbReference>
<dbReference type="InterPro" id="IPR051553">
    <property type="entry name" value="Ran_GTPase-activating"/>
</dbReference>
<dbReference type="InterPro" id="IPR009091">
    <property type="entry name" value="RCC1/BLIP-II"/>
</dbReference>
<dbReference type="InterPro" id="IPR000408">
    <property type="entry name" value="Reg_chr_condens"/>
</dbReference>
<dbReference type="PANTHER" id="PTHR45982">
    <property type="entry name" value="REGULATOR OF CHROMOSOME CONDENSATION"/>
    <property type="match status" value="1"/>
</dbReference>
<dbReference type="PANTHER" id="PTHR45982:SF1">
    <property type="entry name" value="REGULATOR OF CHROMOSOME CONDENSATION"/>
    <property type="match status" value="1"/>
</dbReference>
<dbReference type="Pfam" id="PF00415">
    <property type="entry name" value="RCC1"/>
    <property type="match status" value="2"/>
</dbReference>
<dbReference type="Pfam" id="PF13540">
    <property type="entry name" value="RCC1_2"/>
    <property type="match status" value="3"/>
</dbReference>
<dbReference type="PRINTS" id="PR00633">
    <property type="entry name" value="RCCNDNSATION"/>
</dbReference>
<dbReference type="SUPFAM" id="SSF50985">
    <property type="entry name" value="RCC1/BLIP-II"/>
    <property type="match status" value="1"/>
</dbReference>
<dbReference type="PROSITE" id="PS50012">
    <property type="entry name" value="RCC1_3"/>
    <property type="match status" value="4"/>
</dbReference>
<protein>
    <recommendedName>
        <fullName>RCC1 repeat-containing protein DDB_G0284033</fullName>
    </recommendedName>
</protein>
<organism>
    <name type="scientific">Dictyostelium discoideum</name>
    <name type="common">Social amoeba</name>
    <dbReference type="NCBI Taxonomy" id="44689"/>
    <lineage>
        <taxon>Eukaryota</taxon>
        <taxon>Amoebozoa</taxon>
        <taxon>Evosea</taxon>
        <taxon>Eumycetozoa</taxon>
        <taxon>Dictyostelia</taxon>
        <taxon>Dictyosteliales</taxon>
        <taxon>Dictyosteliaceae</taxon>
        <taxon>Dictyostelium</taxon>
    </lineage>
</organism>